<organism>
    <name type="scientific">Caenorhabditis elegans</name>
    <dbReference type="NCBI Taxonomy" id="6239"/>
    <lineage>
        <taxon>Eukaryota</taxon>
        <taxon>Metazoa</taxon>
        <taxon>Ecdysozoa</taxon>
        <taxon>Nematoda</taxon>
        <taxon>Chromadorea</taxon>
        <taxon>Rhabditida</taxon>
        <taxon>Rhabditina</taxon>
        <taxon>Rhabditomorpha</taxon>
        <taxon>Rhabditoidea</taxon>
        <taxon>Rhabditidae</taxon>
        <taxon>Peloderinae</taxon>
        <taxon>Caenorhabditis</taxon>
    </lineage>
</organism>
<comment type="function">
    <text evidence="1 3">May have GTPase activity. May also bind and hydrolyze ATP. May function as chaperone (By similarity). Likely to have a role in propionyl-CoA and adenosylcobalamin metabolism.</text>
</comment>
<comment type="subcellular location">
    <subcellularLocation>
        <location evidence="4">Mitochondrion</location>
    </subcellularLocation>
</comment>
<comment type="alternative products">
    <event type="alternative splicing"/>
    <isoform>
        <id>Q22111-1</id>
        <name>a</name>
        <sequence type="displayed"/>
    </isoform>
    <isoform>
        <id>Q22111-2</id>
        <name>b</name>
        <sequence type="described" ref="VSP_039464"/>
    </isoform>
</comment>
<comment type="disruption phenotype">
    <text evidence="3">Reduced incorporation of 1-[14C]-propionate. Defective in adenosylcobalamin synthesis. incorporation into macromolecules.</text>
</comment>
<comment type="similarity">
    <text evidence="4">Belongs to the SIMIBI class G3E GTPase family. ArgK/MeaB subfamily.</text>
</comment>
<name>MMAA1_CAEEL</name>
<sequence>MVVRSLLRVSRLTSASCRHASLAVSSTPKPYIPSVTGVQKSMPFDNLLEQYSRVHWDDSVTYDDPNVQKLFKSLMSGSRAALASAITLVESRHPTKRAQGNMLLKMVLDEEREKYKKFGRDSMIFRVGISGSPGVGKSSFIEALGAELTENRGKKVAVLTIDPTSAMTGGSVLGDLTRMQELSRNPKAYIRQSPTSGSLGGVTRGIHEAVILCEGAGYDIVIIETVGVGQSETSVSDMCDMMCLLLSPAHGDELQGVKRGIMEMSDLLVVTKDDGDLKAKAKMTQAEYISALKFMRPRLDVWRPKVMRSSIMDKESVSEVCSSLYEFWDTIGESGDLERRRQDQMKKWMWNHVKDEIMSVFQKHPKIAHLAPKLENEIRSGKITPGLAAETMIRTFFGV</sequence>
<dbReference type="EC" id="3.6.-.-"/>
<dbReference type="EMBL" id="FO081112">
    <property type="protein sequence ID" value="CCD69185.1"/>
    <property type="molecule type" value="Genomic_DNA"/>
</dbReference>
<dbReference type="EMBL" id="FO081112">
    <property type="protein sequence ID" value="CCD69186.1"/>
    <property type="molecule type" value="Genomic_DNA"/>
</dbReference>
<dbReference type="PIR" id="T16792">
    <property type="entry name" value="T16792"/>
</dbReference>
<dbReference type="RefSeq" id="NP_001022302.1">
    <molecule id="Q22111-1"/>
    <property type="nucleotide sequence ID" value="NM_001027131.7"/>
</dbReference>
<dbReference type="RefSeq" id="NP_001022303.1">
    <property type="nucleotide sequence ID" value="NM_001027132.3"/>
</dbReference>
<dbReference type="RefSeq" id="NP_001379869.1">
    <molecule id="Q22111-2"/>
    <property type="nucleotide sequence ID" value="NM_001393114.1"/>
</dbReference>
<dbReference type="SMR" id="Q22111"/>
<dbReference type="BioGRID" id="39500">
    <property type="interactions" value="11"/>
</dbReference>
<dbReference type="FunCoup" id="Q22111">
    <property type="interactions" value="305"/>
</dbReference>
<dbReference type="STRING" id="6239.T02G5.13a.1"/>
<dbReference type="PaxDb" id="6239-T02G5.13a"/>
<dbReference type="PeptideAtlas" id="Q22111"/>
<dbReference type="EnsemblMetazoa" id="T02G5.13a.1">
    <molecule id="Q22111-1"/>
    <property type="protein sequence ID" value="T02G5.13a.1"/>
    <property type="gene ID" value="WBGene00020169"/>
</dbReference>
<dbReference type="EnsemblMetazoa" id="T02G5.13b.1">
    <molecule id="Q22111-2"/>
    <property type="protein sequence ID" value="T02G5.13b.1"/>
    <property type="gene ID" value="WBGene00020169"/>
</dbReference>
<dbReference type="EnsemblMetazoa" id="T02G5.13b.2">
    <molecule id="Q22111-2"/>
    <property type="protein sequence ID" value="T02G5.13b.2"/>
    <property type="gene ID" value="WBGene00020169"/>
</dbReference>
<dbReference type="GeneID" id="174164"/>
<dbReference type="KEGG" id="cel:CELE_T02G5.13"/>
<dbReference type="UCSC" id="T02G5.13a">
    <property type="organism name" value="c. elegans"/>
</dbReference>
<dbReference type="AGR" id="WB:WBGene00020169"/>
<dbReference type="CTD" id="174164"/>
<dbReference type="WormBase" id="T02G5.13a">
    <molecule id="Q22111-1"/>
    <property type="protein sequence ID" value="CE31822"/>
    <property type="gene ID" value="WBGene00020169"/>
    <property type="gene designation" value="mmaa-1"/>
</dbReference>
<dbReference type="WormBase" id="T02G5.13b">
    <molecule id="Q22111-2"/>
    <property type="protein sequence ID" value="CE04865"/>
    <property type="gene ID" value="WBGene00020169"/>
    <property type="gene designation" value="mmaa-1"/>
</dbReference>
<dbReference type="eggNOG" id="ENOG502QR2W">
    <property type="taxonomic scope" value="Eukaryota"/>
</dbReference>
<dbReference type="GeneTree" id="ENSGT00390000009908"/>
<dbReference type="InParanoid" id="Q22111"/>
<dbReference type="OMA" id="WMWERID"/>
<dbReference type="OrthoDB" id="1476984at2759"/>
<dbReference type="PhylomeDB" id="Q22111"/>
<dbReference type="Reactome" id="R-CEL-71032">
    <property type="pathway name" value="Propionyl-CoA catabolism"/>
</dbReference>
<dbReference type="Reactome" id="R-CEL-9759218">
    <property type="pathway name" value="Cobalamin (Cbl) metabolism"/>
</dbReference>
<dbReference type="PRO" id="PR:Q22111"/>
<dbReference type="Proteomes" id="UP000001940">
    <property type="component" value="Chromosome II"/>
</dbReference>
<dbReference type="Bgee" id="WBGene00020169">
    <property type="expression patterns" value="Expressed in germ line (C elegans) and 4 other cell types or tissues"/>
</dbReference>
<dbReference type="GO" id="GO:0005737">
    <property type="term" value="C:cytoplasm"/>
    <property type="evidence" value="ECO:0000318"/>
    <property type="project" value="GO_Central"/>
</dbReference>
<dbReference type="GO" id="GO:0005739">
    <property type="term" value="C:mitochondrion"/>
    <property type="evidence" value="ECO:0007669"/>
    <property type="project" value="UniProtKB-SubCell"/>
</dbReference>
<dbReference type="GO" id="GO:0005524">
    <property type="term" value="F:ATP binding"/>
    <property type="evidence" value="ECO:0007669"/>
    <property type="project" value="UniProtKB-KW"/>
</dbReference>
<dbReference type="GO" id="GO:0005525">
    <property type="term" value="F:GTP binding"/>
    <property type="evidence" value="ECO:0007669"/>
    <property type="project" value="UniProtKB-KW"/>
</dbReference>
<dbReference type="GO" id="GO:0003924">
    <property type="term" value="F:GTPase activity"/>
    <property type="evidence" value="ECO:0000318"/>
    <property type="project" value="GO_Central"/>
</dbReference>
<dbReference type="CDD" id="cd03114">
    <property type="entry name" value="MMAA-like"/>
    <property type="match status" value="1"/>
</dbReference>
<dbReference type="Gene3D" id="1.10.287.130">
    <property type="match status" value="1"/>
</dbReference>
<dbReference type="Gene3D" id="1.20.5.170">
    <property type="match status" value="1"/>
</dbReference>
<dbReference type="Gene3D" id="3.40.50.300">
    <property type="entry name" value="P-loop containing nucleotide triphosphate hydrolases"/>
    <property type="match status" value="1"/>
</dbReference>
<dbReference type="InterPro" id="IPR005129">
    <property type="entry name" value="GTPase_ArgK"/>
</dbReference>
<dbReference type="InterPro" id="IPR027417">
    <property type="entry name" value="P-loop_NTPase"/>
</dbReference>
<dbReference type="NCBIfam" id="TIGR00750">
    <property type="entry name" value="lao"/>
    <property type="match status" value="1"/>
</dbReference>
<dbReference type="NCBIfam" id="NF006958">
    <property type="entry name" value="PRK09435.1"/>
    <property type="match status" value="1"/>
</dbReference>
<dbReference type="PANTHER" id="PTHR23408:SF3">
    <property type="entry name" value="METHYLMALONIC ACIDURIA TYPE A PROTEIN, MITOCHONDRIAL"/>
    <property type="match status" value="1"/>
</dbReference>
<dbReference type="PANTHER" id="PTHR23408">
    <property type="entry name" value="METHYLMALONYL-COA MUTASE"/>
    <property type="match status" value="1"/>
</dbReference>
<dbReference type="Pfam" id="PF03308">
    <property type="entry name" value="MeaB"/>
    <property type="match status" value="1"/>
</dbReference>
<dbReference type="SUPFAM" id="SSF52540">
    <property type="entry name" value="P-loop containing nucleoside triphosphate hydrolases"/>
    <property type="match status" value="1"/>
</dbReference>
<reference key="1">
    <citation type="journal article" date="1998" name="Science">
        <title>Genome sequence of the nematode C. elegans: a platform for investigating biology.</title>
        <authorList>
            <consortium name="The C. elegans sequencing consortium"/>
        </authorList>
    </citation>
    <scope>NUCLEOTIDE SEQUENCE [LARGE SCALE GENOMIC DNA]</scope>
    <scope>ALTERNATIVE SPLICING</scope>
    <source>
        <strain>Bristol N2</strain>
    </source>
</reference>
<reference key="2">
    <citation type="journal article" date="2006" name="Mol. Genet. Metab.">
        <title>Propionyl-CoA and adenosylcobalamin metabolism in Caenorhabditis elegans: evidence for a role of methylmalonyl-CoA epimerase in intermediary metabolism.</title>
        <authorList>
            <person name="Chandler R.J."/>
            <person name="Aswani V."/>
            <person name="Tsai M.S."/>
            <person name="Falk M."/>
            <person name="Wehrli N."/>
            <person name="Stabler S."/>
            <person name="Allen R."/>
            <person name="Sedensky M."/>
            <person name="Kazazian H.H."/>
            <person name="Venditti C.P."/>
        </authorList>
    </citation>
    <scope>FUNCTION</scope>
    <scope>DISRUPTION PHENOTYPE</scope>
</reference>
<keyword id="KW-0025">Alternative splicing</keyword>
<keyword id="KW-0067">ATP-binding</keyword>
<keyword id="KW-0143">Chaperone</keyword>
<keyword id="KW-0342">GTP-binding</keyword>
<keyword id="KW-0378">Hydrolase</keyword>
<keyword id="KW-0496">Mitochondrion</keyword>
<keyword id="KW-0547">Nucleotide-binding</keyword>
<keyword id="KW-1185">Reference proteome</keyword>
<keyword id="KW-0809">Transit peptide</keyword>
<protein>
    <recommendedName>
        <fullName>Methylmalonic aciduria type A homolog, mitochondrial</fullName>
        <ecNumber>3.6.-.-</ecNumber>
    </recommendedName>
    <alternativeName>
        <fullName>Methylmalonic aciduria type A protein 1</fullName>
    </alternativeName>
</protein>
<gene>
    <name type="primary">mmaa-1</name>
    <name type="ORF">T02G5.13</name>
</gene>
<feature type="transit peptide" description="Mitochondrion" evidence="2">
    <location>
        <begin position="1"/>
        <end position="15"/>
    </location>
</feature>
<feature type="chain" id="PRO_0000157821" description="Methylmalonic aciduria type A homolog, mitochondrial">
    <location>
        <begin position="16"/>
        <end position="399"/>
    </location>
</feature>
<feature type="binding site" evidence="1">
    <location>
        <begin position="131"/>
        <end position="139"/>
    </location>
    <ligand>
        <name>GTP</name>
        <dbReference type="ChEBI" id="CHEBI:37565"/>
    </ligand>
</feature>
<feature type="binding site" evidence="1">
    <location>
        <position position="274"/>
    </location>
    <ligand>
        <name>GTP</name>
        <dbReference type="ChEBI" id="CHEBI:37565"/>
    </ligand>
</feature>
<feature type="binding site" evidence="1">
    <location>
        <begin position="310"/>
        <end position="312"/>
    </location>
    <ligand>
        <name>GTP</name>
        <dbReference type="ChEBI" id="CHEBI:37565"/>
    </ligand>
</feature>
<feature type="splice variant" id="VSP_039464" description="In isoform b." evidence="4">
    <location>
        <begin position="1"/>
        <end position="101"/>
    </location>
</feature>
<evidence type="ECO:0000250" key="1"/>
<evidence type="ECO:0000255" key="2"/>
<evidence type="ECO:0000269" key="3">
    <source>
    </source>
</evidence>
<evidence type="ECO:0000305" key="4"/>
<proteinExistence type="inferred from homology"/>
<accession>Q22111</accession>
<accession>Q6AHP0</accession>